<dbReference type="PIR" id="A30539">
    <property type="entry name" value="A30539"/>
</dbReference>
<dbReference type="PIR" id="A30556">
    <property type="entry name" value="A30556"/>
</dbReference>
<dbReference type="PIR" id="B30540">
    <property type="entry name" value="B30540"/>
</dbReference>
<dbReference type="PIR" id="B30556">
    <property type="entry name" value="B30556"/>
</dbReference>
<dbReference type="PIR" id="B90795">
    <property type="entry name" value="AVMS63"/>
</dbReference>
<dbReference type="PIR" id="D30556">
    <property type="entry name" value="D30556"/>
</dbReference>
<dbReference type="PIR" id="E30539">
    <property type="entry name" value="E30539"/>
</dbReference>
<dbReference type="PIR" id="H30539">
    <property type="entry name" value="H30539"/>
</dbReference>
<dbReference type="PIR" id="I30535">
    <property type="entry name" value="I30535"/>
</dbReference>
<dbReference type="PIR" id="PT0354">
    <property type="entry name" value="PT0354"/>
</dbReference>
<dbReference type="PDB" id="1MCP">
    <property type="method" value="X-ray"/>
    <property type="resolution" value="2.70 A"/>
    <property type="chains" value="H=1-122"/>
</dbReference>
<dbReference type="PDB" id="2CJU">
    <property type="method" value="X-ray"/>
    <property type="resolution" value="2.50 A"/>
    <property type="chains" value="H=1-121"/>
</dbReference>
<dbReference type="PDB" id="2MCP">
    <property type="method" value="X-ray"/>
    <property type="resolution" value="3.10 A"/>
    <property type="chains" value="H=1-122"/>
</dbReference>
<dbReference type="PDBsum" id="1MCP"/>
<dbReference type="PDBsum" id="2CJU"/>
<dbReference type="PDBsum" id="2MCP"/>
<dbReference type="SMR" id="P01789"/>
<dbReference type="FunCoup" id="P01789">
    <property type="interactions" value="557"/>
</dbReference>
<dbReference type="MINT" id="P01789"/>
<dbReference type="InParanoid" id="P01789"/>
<dbReference type="EvolutionaryTrace" id="P01789"/>
<dbReference type="Proteomes" id="UP000000589">
    <property type="component" value="Unplaced"/>
</dbReference>
<dbReference type="RNAct" id="P01789">
    <property type="molecule type" value="protein"/>
</dbReference>
<dbReference type="GO" id="GO:0005576">
    <property type="term" value="C:extracellular region"/>
    <property type="evidence" value="ECO:0007669"/>
    <property type="project" value="UniProtKB-ARBA"/>
</dbReference>
<dbReference type="GO" id="GO:0019814">
    <property type="term" value="C:immunoglobulin complex"/>
    <property type="evidence" value="ECO:0007669"/>
    <property type="project" value="UniProtKB-KW"/>
</dbReference>
<dbReference type="GO" id="GO:0003823">
    <property type="term" value="F:antigen binding"/>
    <property type="evidence" value="ECO:0000318"/>
    <property type="project" value="GO_Central"/>
</dbReference>
<dbReference type="GO" id="GO:0016064">
    <property type="term" value="P:immunoglobulin mediated immune response"/>
    <property type="evidence" value="ECO:0000318"/>
    <property type="project" value="GO_Central"/>
</dbReference>
<dbReference type="FunFam" id="2.60.40.10:FF:001372">
    <property type="entry name" value="Ig heavy chain V region M603"/>
    <property type="match status" value="1"/>
</dbReference>
<dbReference type="Gene3D" id="2.60.40.10">
    <property type="entry name" value="Immunoglobulins"/>
    <property type="match status" value="1"/>
</dbReference>
<dbReference type="InterPro" id="IPR007110">
    <property type="entry name" value="Ig-like_dom"/>
</dbReference>
<dbReference type="InterPro" id="IPR036179">
    <property type="entry name" value="Ig-like_dom_sf"/>
</dbReference>
<dbReference type="InterPro" id="IPR013783">
    <property type="entry name" value="Ig-like_fold"/>
</dbReference>
<dbReference type="InterPro" id="IPR003599">
    <property type="entry name" value="Ig_sub"/>
</dbReference>
<dbReference type="InterPro" id="IPR013106">
    <property type="entry name" value="Ig_V-set"/>
</dbReference>
<dbReference type="InterPro" id="IPR050199">
    <property type="entry name" value="IgHV"/>
</dbReference>
<dbReference type="PANTHER" id="PTHR23266">
    <property type="entry name" value="IMMUNOGLOBULIN HEAVY CHAIN"/>
    <property type="match status" value="1"/>
</dbReference>
<dbReference type="Pfam" id="PF07686">
    <property type="entry name" value="V-set"/>
    <property type="match status" value="1"/>
</dbReference>
<dbReference type="SMART" id="SM00409">
    <property type="entry name" value="IG"/>
    <property type="match status" value="1"/>
</dbReference>
<dbReference type="SMART" id="SM00406">
    <property type="entry name" value="IGv"/>
    <property type="match status" value="1"/>
</dbReference>
<dbReference type="SUPFAM" id="SSF48726">
    <property type="entry name" value="Immunoglobulin"/>
    <property type="match status" value="1"/>
</dbReference>
<dbReference type="PROSITE" id="PS50835">
    <property type="entry name" value="IG_LIKE"/>
    <property type="match status" value="1"/>
</dbReference>
<evidence type="ECO:0007829" key="1">
    <source>
        <dbReference type="PDB" id="2CJU"/>
    </source>
</evidence>
<name>HVM20_MOUSE</name>
<organism>
    <name type="scientific">Mus musculus</name>
    <name type="common">Mouse</name>
    <dbReference type="NCBI Taxonomy" id="10090"/>
    <lineage>
        <taxon>Eukaryota</taxon>
        <taxon>Metazoa</taxon>
        <taxon>Chordata</taxon>
        <taxon>Craniata</taxon>
        <taxon>Vertebrata</taxon>
        <taxon>Euteleostomi</taxon>
        <taxon>Mammalia</taxon>
        <taxon>Eutheria</taxon>
        <taxon>Euarchontoglires</taxon>
        <taxon>Glires</taxon>
        <taxon>Rodentia</taxon>
        <taxon>Myomorpha</taxon>
        <taxon>Muroidea</taxon>
        <taxon>Muridae</taxon>
        <taxon>Murinae</taxon>
        <taxon>Mus</taxon>
        <taxon>Mus</taxon>
    </lineage>
</organism>
<proteinExistence type="evidence at protein level"/>
<accession>P01789</accession>
<reference key="1">
    <citation type="journal article" date="1980" name="Cell">
        <title>An immunoglobulin heavy chain variable region gene is generated from three segments of DNA: VH, D and JH.</title>
        <authorList>
            <person name="Early P."/>
            <person name="Huang H."/>
            <person name="Davis M."/>
            <person name="Calame K."/>
            <person name="Hood L."/>
        </authorList>
    </citation>
    <scope>NUCLEOTIDE SEQUENCE</scope>
</reference>
<reference key="2">
    <citation type="journal article" date="1974" name="Biochemistry">
        <title>Variable region sequence of the heavy chain from a phosphorylcholine binding myeloma protein.</title>
        <authorList>
            <person name="Rudikoff S."/>
            <person name="Potter M."/>
        </authorList>
    </citation>
    <scope>PROTEIN SEQUENCE OF 1-120</scope>
</reference>
<reference key="3">
    <citation type="journal article" date="1974" name="Proc. Natl. Acad. Sci. U.S.A.">
        <title>The three-dimensional structure of a phosphorylcholine-binding mouse immunoglobulin Fab and the nature of the antigen binding site.</title>
        <authorList>
            <person name="Segal D.M."/>
            <person name="Padlan E.A."/>
            <person name="Cohen G.H."/>
            <person name="Rudikoff S."/>
            <person name="Potter M."/>
            <person name="Davies D.R."/>
        </authorList>
    </citation>
    <scope>X-RAY CRYSTALLOGRAPHY (3.1 ANGSTROMS) OF FAB FRAGMENT</scope>
</reference>
<comment type="miscellaneous">
    <text>This chain was isolated from a myeloma protein that binds phosphorylcholine.</text>
</comment>
<sequence>EVKLVESGGGLVQPGGSLRLSCATSGFTFSDFYMEWVRQPPGKRLEWIAASRNKGNKYTTEYSASVKGRFIVSRDTSQSILYLQMNALRAEDTAIYYCARNYYGSTWYFDVWGAGTTVTVSS</sequence>
<protein>
    <recommendedName>
        <fullName>Ig heavy chain V region M603</fullName>
    </recommendedName>
</protein>
<feature type="chain" id="PRO_0000059875" description="Ig heavy chain V region M603">
    <location>
        <begin position="1"/>
        <end position="122" status="greater than"/>
    </location>
</feature>
<feature type="domain" description="Ig-like">
    <location>
        <begin position="1"/>
        <end position="121"/>
    </location>
</feature>
<feature type="site" description="H-bond with the phosphate group of phosphorylcholine">
    <location>
        <position position="33"/>
    </location>
</feature>
<feature type="site" description="H-bond with the phosphate group of phosphorylcholine">
    <location>
        <position position="52"/>
    </location>
</feature>
<feature type="non-terminal residue">
    <location>
        <position position="122"/>
    </location>
</feature>
<feature type="strand" evidence="1">
    <location>
        <begin position="3"/>
        <end position="7"/>
    </location>
</feature>
<feature type="strand" evidence="1">
    <location>
        <begin position="10"/>
        <end position="12"/>
    </location>
</feature>
<feature type="strand" evidence="1">
    <location>
        <begin position="18"/>
        <end position="27"/>
    </location>
</feature>
<feature type="helix" evidence="1">
    <location>
        <begin position="29"/>
        <end position="31"/>
    </location>
</feature>
<feature type="strand" evidence="1">
    <location>
        <begin position="34"/>
        <end position="39"/>
    </location>
</feature>
<feature type="strand" evidence="1">
    <location>
        <begin position="41"/>
        <end position="43"/>
    </location>
</feature>
<feature type="strand" evidence="1">
    <location>
        <begin position="46"/>
        <end position="51"/>
    </location>
</feature>
<feature type="helix" evidence="1">
    <location>
        <begin position="54"/>
        <end position="56"/>
    </location>
</feature>
<feature type="strand" evidence="1">
    <location>
        <begin position="60"/>
        <end position="62"/>
    </location>
</feature>
<feature type="helix" evidence="1">
    <location>
        <begin position="64"/>
        <end position="66"/>
    </location>
</feature>
<feature type="turn" evidence="1">
    <location>
        <begin position="67"/>
        <end position="69"/>
    </location>
</feature>
<feature type="strand" evidence="1">
    <location>
        <begin position="70"/>
        <end position="75"/>
    </location>
</feature>
<feature type="turn" evidence="1">
    <location>
        <begin position="76"/>
        <end position="79"/>
    </location>
</feature>
<feature type="strand" evidence="1">
    <location>
        <begin position="80"/>
        <end position="85"/>
    </location>
</feature>
<feature type="helix" evidence="1">
    <location>
        <begin position="90"/>
        <end position="92"/>
    </location>
</feature>
<feature type="strand" evidence="1">
    <location>
        <begin position="94"/>
        <end position="102"/>
    </location>
</feature>
<feature type="turn" evidence="1">
    <location>
        <begin position="103"/>
        <end position="105"/>
    </location>
</feature>
<feature type="strand" evidence="1">
    <location>
        <begin position="109"/>
        <end position="112"/>
    </location>
</feature>
<feature type="strand" evidence="1">
    <location>
        <begin position="116"/>
        <end position="120"/>
    </location>
</feature>
<keyword id="KW-0002">3D-structure</keyword>
<keyword id="KW-1064">Adaptive immunity</keyword>
<keyword id="KW-0903">Direct protein sequencing</keyword>
<keyword id="KW-0391">Immunity</keyword>
<keyword id="KW-1280">Immunoglobulin</keyword>
<keyword id="KW-1185">Reference proteome</keyword>